<keyword id="KW-0067">ATP-binding</keyword>
<keyword id="KW-0963">Cytoplasm</keyword>
<keyword id="KW-0227">DNA damage</keyword>
<keyword id="KW-0234">DNA repair</keyword>
<keyword id="KW-0235">DNA replication</keyword>
<keyword id="KW-0238">DNA-binding</keyword>
<keyword id="KW-0547">Nucleotide-binding</keyword>
<keyword id="KW-1185">Reference proteome</keyword>
<keyword id="KW-0742">SOS response</keyword>
<gene>
    <name evidence="1" type="primary">recF</name>
    <name type="ordered locus">Sama_0015</name>
</gene>
<protein>
    <recommendedName>
        <fullName evidence="1">DNA replication and repair protein RecF</fullName>
    </recommendedName>
</protein>
<proteinExistence type="inferred from homology"/>
<organism>
    <name type="scientific">Shewanella amazonensis (strain ATCC BAA-1098 / SB2B)</name>
    <dbReference type="NCBI Taxonomy" id="326297"/>
    <lineage>
        <taxon>Bacteria</taxon>
        <taxon>Pseudomonadati</taxon>
        <taxon>Pseudomonadota</taxon>
        <taxon>Gammaproteobacteria</taxon>
        <taxon>Alteromonadales</taxon>
        <taxon>Shewanellaceae</taxon>
        <taxon>Shewanella</taxon>
    </lineage>
</organism>
<sequence length="360" mass="40129">MSLSRLSIDAFRNIDSAQLAPGAGLNLIYGHNGSGKTSILEAIYFLGMGRSFRSHLSQRVIQNDADCLTLFAVAEGQAGDSRIGLRRHRSGDTEVKIDGEKVKRLSQLAEALPIQVITPESFSLLFEGPSARRQFIDWGAFHASKQFHLAWMNTRRILKQRNQLLRDGASYEHIAFWDKELIRYALEVTAIRNDYVGSLNGVLKGIIGEFLPDVDIRVSFTRGWDSKTDFSELLQSQYARDLAIGHTVSGPHKADLRLRVGNLPAQDALSRGQLKLLVCALRIAQGKLLKQQIDKHSIYLVDDLPSELDAKHRQLLLKELIDTGAQLFVTAIEPSAIVDSLPVPPDRMFHVQAGRVTQTK</sequence>
<reference key="1">
    <citation type="submission" date="2006-12" db="EMBL/GenBank/DDBJ databases">
        <title>Complete sequence of Shewanella amazonensis SB2B.</title>
        <authorList>
            <consortium name="US DOE Joint Genome Institute"/>
            <person name="Copeland A."/>
            <person name="Lucas S."/>
            <person name="Lapidus A."/>
            <person name="Barry K."/>
            <person name="Detter J.C."/>
            <person name="Glavina del Rio T."/>
            <person name="Hammon N."/>
            <person name="Israni S."/>
            <person name="Dalin E."/>
            <person name="Tice H."/>
            <person name="Pitluck S."/>
            <person name="Munk A.C."/>
            <person name="Brettin T."/>
            <person name="Bruce D."/>
            <person name="Han C."/>
            <person name="Tapia R."/>
            <person name="Gilna P."/>
            <person name="Schmutz J."/>
            <person name="Larimer F."/>
            <person name="Land M."/>
            <person name="Hauser L."/>
            <person name="Kyrpides N."/>
            <person name="Mikhailova N."/>
            <person name="Fredrickson J."/>
            <person name="Richardson P."/>
        </authorList>
    </citation>
    <scope>NUCLEOTIDE SEQUENCE [LARGE SCALE GENOMIC DNA]</scope>
    <source>
        <strain>ATCC BAA-1098 / SB2B</strain>
    </source>
</reference>
<accession>A1S1H1</accession>
<comment type="function">
    <text evidence="1">The RecF protein is involved in DNA metabolism; it is required for DNA replication and normal SOS inducibility. RecF binds preferentially to single-stranded, linear DNA. It also seems to bind ATP.</text>
</comment>
<comment type="subcellular location">
    <subcellularLocation>
        <location evidence="1">Cytoplasm</location>
    </subcellularLocation>
</comment>
<comment type="similarity">
    <text evidence="1">Belongs to the RecF family.</text>
</comment>
<feature type="chain" id="PRO_1000048569" description="DNA replication and repair protein RecF">
    <location>
        <begin position="1"/>
        <end position="360"/>
    </location>
</feature>
<feature type="binding site" evidence="1">
    <location>
        <begin position="30"/>
        <end position="37"/>
    </location>
    <ligand>
        <name>ATP</name>
        <dbReference type="ChEBI" id="CHEBI:30616"/>
    </ligand>
</feature>
<name>RECF_SHEAM</name>
<evidence type="ECO:0000255" key="1">
    <source>
        <dbReference type="HAMAP-Rule" id="MF_00365"/>
    </source>
</evidence>
<dbReference type="EMBL" id="CP000507">
    <property type="protein sequence ID" value="ABL98227.1"/>
    <property type="molecule type" value="Genomic_DNA"/>
</dbReference>
<dbReference type="RefSeq" id="WP_011758138.1">
    <property type="nucleotide sequence ID" value="NC_008700.1"/>
</dbReference>
<dbReference type="SMR" id="A1S1H1"/>
<dbReference type="STRING" id="326297.Sama_0015"/>
<dbReference type="KEGG" id="saz:Sama_0015"/>
<dbReference type="eggNOG" id="COG1195">
    <property type="taxonomic scope" value="Bacteria"/>
</dbReference>
<dbReference type="HOGENOM" id="CLU_040267_0_0_6"/>
<dbReference type="OrthoDB" id="9803889at2"/>
<dbReference type="Proteomes" id="UP000009175">
    <property type="component" value="Chromosome"/>
</dbReference>
<dbReference type="GO" id="GO:0005737">
    <property type="term" value="C:cytoplasm"/>
    <property type="evidence" value="ECO:0007669"/>
    <property type="project" value="UniProtKB-SubCell"/>
</dbReference>
<dbReference type="GO" id="GO:0005524">
    <property type="term" value="F:ATP binding"/>
    <property type="evidence" value="ECO:0007669"/>
    <property type="project" value="UniProtKB-UniRule"/>
</dbReference>
<dbReference type="GO" id="GO:0003697">
    <property type="term" value="F:single-stranded DNA binding"/>
    <property type="evidence" value="ECO:0007669"/>
    <property type="project" value="UniProtKB-UniRule"/>
</dbReference>
<dbReference type="GO" id="GO:0006260">
    <property type="term" value="P:DNA replication"/>
    <property type="evidence" value="ECO:0007669"/>
    <property type="project" value="UniProtKB-UniRule"/>
</dbReference>
<dbReference type="GO" id="GO:0000731">
    <property type="term" value="P:DNA synthesis involved in DNA repair"/>
    <property type="evidence" value="ECO:0007669"/>
    <property type="project" value="TreeGrafter"/>
</dbReference>
<dbReference type="GO" id="GO:0006302">
    <property type="term" value="P:double-strand break repair"/>
    <property type="evidence" value="ECO:0007669"/>
    <property type="project" value="TreeGrafter"/>
</dbReference>
<dbReference type="GO" id="GO:0009432">
    <property type="term" value="P:SOS response"/>
    <property type="evidence" value="ECO:0007669"/>
    <property type="project" value="UniProtKB-UniRule"/>
</dbReference>
<dbReference type="Gene3D" id="3.40.50.300">
    <property type="entry name" value="P-loop containing nucleotide triphosphate hydrolases"/>
    <property type="match status" value="1"/>
</dbReference>
<dbReference type="Gene3D" id="1.20.1050.90">
    <property type="entry name" value="RecF/RecN/SMC, N-terminal domain"/>
    <property type="match status" value="1"/>
</dbReference>
<dbReference type="HAMAP" id="MF_00365">
    <property type="entry name" value="RecF"/>
    <property type="match status" value="1"/>
</dbReference>
<dbReference type="InterPro" id="IPR001238">
    <property type="entry name" value="DNA-binding_RecF"/>
</dbReference>
<dbReference type="InterPro" id="IPR018078">
    <property type="entry name" value="DNA-binding_RecF_CS"/>
</dbReference>
<dbReference type="InterPro" id="IPR027417">
    <property type="entry name" value="P-loop_NTPase"/>
</dbReference>
<dbReference type="InterPro" id="IPR003395">
    <property type="entry name" value="RecF/RecN/SMC_N"/>
</dbReference>
<dbReference type="InterPro" id="IPR042174">
    <property type="entry name" value="RecF_2"/>
</dbReference>
<dbReference type="NCBIfam" id="TIGR00611">
    <property type="entry name" value="recf"/>
    <property type="match status" value="1"/>
</dbReference>
<dbReference type="PANTHER" id="PTHR32182">
    <property type="entry name" value="DNA REPLICATION AND REPAIR PROTEIN RECF"/>
    <property type="match status" value="1"/>
</dbReference>
<dbReference type="PANTHER" id="PTHR32182:SF0">
    <property type="entry name" value="DNA REPLICATION AND REPAIR PROTEIN RECF"/>
    <property type="match status" value="1"/>
</dbReference>
<dbReference type="Pfam" id="PF02463">
    <property type="entry name" value="SMC_N"/>
    <property type="match status" value="1"/>
</dbReference>
<dbReference type="SUPFAM" id="SSF52540">
    <property type="entry name" value="P-loop containing nucleoside triphosphate hydrolases"/>
    <property type="match status" value="1"/>
</dbReference>
<dbReference type="PROSITE" id="PS00617">
    <property type="entry name" value="RECF_1"/>
    <property type="match status" value="1"/>
</dbReference>
<dbReference type="PROSITE" id="PS00618">
    <property type="entry name" value="RECF_2"/>
    <property type="match status" value="1"/>
</dbReference>